<dbReference type="EC" id="2.1.2.1" evidence="1"/>
<dbReference type="EMBL" id="CP000887">
    <property type="protein sequence ID" value="ACD72260.1"/>
    <property type="molecule type" value="Genomic_DNA"/>
</dbReference>
<dbReference type="RefSeq" id="WP_002966764.1">
    <property type="nucleotide sequence ID" value="NC_010742.1"/>
</dbReference>
<dbReference type="SMR" id="B2S513"/>
<dbReference type="GeneID" id="93016845"/>
<dbReference type="KEGG" id="bmc:BAbS19_I07360"/>
<dbReference type="HOGENOM" id="CLU_022477_2_1_5"/>
<dbReference type="UniPathway" id="UPA00193"/>
<dbReference type="UniPathway" id="UPA00288">
    <property type="reaction ID" value="UER01023"/>
</dbReference>
<dbReference type="Proteomes" id="UP000002565">
    <property type="component" value="Chromosome 1"/>
</dbReference>
<dbReference type="GO" id="GO:0005829">
    <property type="term" value="C:cytosol"/>
    <property type="evidence" value="ECO:0007669"/>
    <property type="project" value="TreeGrafter"/>
</dbReference>
<dbReference type="GO" id="GO:0004372">
    <property type="term" value="F:glycine hydroxymethyltransferase activity"/>
    <property type="evidence" value="ECO:0007669"/>
    <property type="project" value="UniProtKB-UniRule"/>
</dbReference>
<dbReference type="GO" id="GO:0030170">
    <property type="term" value="F:pyridoxal phosphate binding"/>
    <property type="evidence" value="ECO:0007669"/>
    <property type="project" value="UniProtKB-UniRule"/>
</dbReference>
<dbReference type="GO" id="GO:0019264">
    <property type="term" value="P:glycine biosynthetic process from serine"/>
    <property type="evidence" value="ECO:0007669"/>
    <property type="project" value="UniProtKB-UniRule"/>
</dbReference>
<dbReference type="GO" id="GO:0035999">
    <property type="term" value="P:tetrahydrofolate interconversion"/>
    <property type="evidence" value="ECO:0007669"/>
    <property type="project" value="UniProtKB-UniRule"/>
</dbReference>
<dbReference type="CDD" id="cd00378">
    <property type="entry name" value="SHMT"/>
    <property type="match status" value="1"/>
</dbReference>
<dbReference type="FunFam" id="3.40.640.10:FF:000001">
    <property type="entry name" value="Serine hydroxymethyltransferase"/>
    <property type="match status" value="1"/>
</dbReference>
<dbReference type="FunFam" id="3.90.1150.10:FF:000003">
    <property type="entry name" value="Serine hydroxymethyltransferase"/>
    <property type="match status" value="1"/>
</dbReference>
<dbReference type="Gene3D" id="3.90.1150.10">
    <property type="entry name" value="Aspartate Aminotransferase, domain 1"/>
    <property type="match status" value="1"/>
</dbReference>
<dbReference type="Gene3D" id="3.40.640.10">
    <property type="entry name" value="Type I PLP-dependent aspartate aminotransferase-like (Major domain)"/>
    <property type="match status" value="1"/>
</dbReference>
<dbReference type="HAMAP" id="MF_00051">
    <property type="entry name" value="SHMT"/>
    <property type="match status" value="1"/>
</dbReference>
<dbReference type="InterPro" id="IPR015424">
    <property type="entry name" value="PyrdxlP-dep_Trfase"/>
</dbReference>
<dbReference type="InterPro" id="IPR015421">
    <property type="entry name" value="PyrdxlP-dep_Trfase_major"/>
</dbReference>
<dbReference type="InterPro" id="IPR015422">
    <property type="entry name" value="PyrdxlP-dep_Trfase_small"/>
</dbReference>
<dbReference type="InterPro" id="IPR001085">
    <property type="entry name" value="Ser_HO-MeTrfase"/>
</dbReference>
<dbReference type="InterPro" id="IPR049943">
    <property type="entry name" value="Ser_HO-MeTrfase-like"/>
</dbReference>
<dbReference type="InterPro" id="IPR019798">
    <property type="entry name" value="Ser_HO-MeTrfase_PLP_BS"/>
</dbReference>
<dbReference type="InterPro" id="IPR039429">
    <property type="entry name" value="SHMT-like_dom"/>
</dbReference>
<dbReference type="NCBIfam" id="NF000586">
    <property type="entry name" value="PRK00011.1"/>
    <property type="match status" value="1"/>
</dbReference>
<dbReference type="PANTHER" id="PTHR11680">
    <property type="entry name" value="SERINE HYDROXYMETHYLTRANSFERASE"/>
    <property type="match status" value="1"/>
</dbReference>
<dbReference type="PANTHER" id="PTHR11680:SF35">
    <property type="entry name" value="SERINE HYDROXYMETHYLTRANSFERASE 1"/>
    <property type="match status" value="1"/>
</dbReference>
<dbReference type="Pfam" id="PF00464">
    <property type="entry name" value="SHMT"/>
    <property type="match status" value="1"/>
</dbReference>
<dbReference type="PIRSF" id="PIRSF000412">
    <property type="entry name" value="SHMT"/>
    <property type="match status" value="1"/>
</dbReference>
<dbReference type="SUPFAM" id="SSF53383">
    <property type="entry name" value="PLP-dependent transferases"/>
    <property type="match status" value="1"/>
</dbReference>
<dbReference type="PROSITE" id="PS00096">
    <property type="entry name" value="SHMT"/>
    <property type="match status" value="1"/>
</dbReference>
<comment type="function">
    <text evidence="1">Catalyzes the reversible interconversion of serine and glycine with tetrahydrofolate (THF) serving as the one-carbon carrier. This reaction serves as the major source of one-carbon groups required for the biosynthesis of purines, thymidylate, methionine, and other important biomolecules. Also exhibits THF-independent aldolase activity toward beta-hydroxyamino acids, producing glycine and aldehydes, via a retro-aldol mechanism.</text>
</comment>
<comment type="catalytic activity">
    <reaction evidence="1">
        <text>(6R)-5,10-methylene-5,6,7,8-tetrahydrofolate + glycine + H2O = (6S)-5,6,7,8-tetrahydrofolate + L-serine</text>
        <dbReference type="Rhea" id="RHEA:15481"/>
        <dbReference type="ChEBI" id="CHEBI:15377"/>
        <dbReference type="ChEBI" id="CHEBI:15636"/>
        <dbReference type="ChEBI" id="CHEBI:33384"/>
        <dbReference type="ChEBI" id="CHEBI:57305"/>
        <dbReference type="ChEBI" id="CHEBI:57453"/>
        <dbReference type="EC" id="2.1.2.1"/>
    </reaction>
</comment>
<comment type="cofactor">
    <cofactor evidence="1">
        <name>pyridoxal 5'-phosphate</name>
        <dbReference type="ChEBI" id="CHEBI:597326"/>
    </cofactor>
</comment>
<comment type="pathway">
    <text evidence="1">One-carbon metabolism; tetrahydrofolate interconversion.</text>
</comment>
<comment type="pathway">
    <text evidence="1">Amino-acid biosynthesis; glycine biosynthesis; glycine from L-serine: step 1/1.</text>
</comment>
<comment type="subunit">
    <text evidence="1">Homodimer.</text>
</comment>
<comment type="subcellular location">
    <subcellularLocation>
        <location evidence="1">Cytoplasm</location>
    </subcellularLocation>
</comment>
<comment type="similarity">
    <text evidence="1">Belongs to the SHMT family.</text>
</comment>
<proteinExistence type="inferred from homology"/>
<organism>
    <name type="scientific">Brucella abortus (strain S19)</name>
    <dbReference type="NCBI Taxonomy" id="430066"/>
    <lineage>
        <taxon>Bacteria</taxon>
        <taxon>Pseudomonadati</taxon>
        <taxon>Pseudomonadota</taxon>
        <taxon>Alphaproteobacteria</taxon>
        <taxon>Hyphomicrobiales</taxon>
        <taxon>Brucellaceae</taxon>
        <taxon>Brucella/Ochrobactrum group</taxon>
        <taxon>Brucella</taxon>
    </lineage>
</organism>
<keyword id="KW-0028">Amino-acid biosynthesis</keyword>
<keyword id="KW-0963">Cytoplasm</keyword>
<keyword id="KW-0554">One-carbon metabolism</keyword>
<keyword id="KW-0663">Pyridoxal phosphate</keyword>
<keyword id="KW-0808">Transferase</keyword>
<protein>
    <recommendedName>
        <fullName evidence="1">Serine hydroxymethyltransferase</fullName>
        <shortName evidence="1">SHMT</shortName>
        <shortName evidence="1">Serine methylase</shortName>
        <ecNumber evidence="1">2.1.2.1</ecNumber>
    </recommendedName>
</protein>
<gene>
    <name evidence="1" type="primary">glyA</name>
    <name type="ordered locus">BAbS19_I07360</name>
</gene>
<accession>B2S513</accession>
<feature type="chain" id="PRO_1000091523" description="Serine hydroxymethyltransferase">
    <location>
        <begin position="1"/>
        <end position="438"/>
    </location>
</feature>
<feature type="binding site" evidence="1">
    <location>
        <position position="133"/>
    </location>
    <ligand>
        <name>(6S)-5,6,7,8-tetrahydrofolate</name>
        <dbReference type="ChEBI" id="CHEBI:57453"/>
    </ligand>
</feature>
<feature type="binding site" evidence="1">
    <location>
        <begin position="137"/>
        <end position="139"/>
    </location>
    <ligand>
        <name>(6S)-5,6,7,8-tetrahydrofolate</name>
        <dbReference type="ChEBI" id="CHEBI:57453"/>
    </ligand>
</feature>
<feature type="site" description="Plays an important role in substrate specificity" evidence="1">
    <location>
        <position position="241"/>
    </location>
</feature>
<feature type="modified residue" description="N6-(pyridoxal phosphate)lysine" evidence="1">
    <location>
        <position position="242"/>
    </location>
</feature>
<name>GLYA_BRUA1</name>
<reference key="1">
    <citation type="journal article" date="2008" name="PLoS ONE">
        <title>Genome sequence of Brucella abortus vaccine strain S19 compared to virulent strains yields candidate virulence genes.</title>
        <authorList>
            <person name="Crasta O.R."/>
            <person name="Folkerts O."/>
            <person name="Fei Z."/>
            <person name="Mane S.P."/>
            <person name="Evans C."/>
            <person name="Martino-Catt S."/>
            <person name="Bricker B."/>
            <person name="Yu G."/>
            <person name="Du L."/>
            <person name="Sobral B.W."/>
        </authorList>
    </citation>
    <scope>NUCLEOTIDE SEQUENCE [LARGE SCALE GENOMIC DNA]</scope>
    <source>
        <strain>S19</strain>
    </source>
</reference>
<sequence length="438" mass="47161">MSQANAATKAYSDVFFNASLEDIDPEIFGAIRNELGRQRHEIELIASENIVSRAVLEAQGSILTNKYAEGYPGKRYYGGCQYVDVVEELAIERAKKLFGAEFANVQPNSGSQMNQAVFLALLQPGDTFMGLDLNSGGHLTHGSPVNMSGKWFNVVSYGVRKDDHLLDMDEVARLARENKPKLILAGGTAYSRIWDWKRFREIADEVGAYLMVDMAHIAGLVAGGQHPSPVPHAHVCTTTTHKSLRGPRGGMILTNDADIAKKINSAVFPGLQGGPLMHVIAGKAVAFAEALKPEFKLYAKNVVDNARALAEELKSHGLDIVSGGTDNHLMLVDLRPKNATGKRAEAALGRANITCNKNGIPFDPEKPFVTSGVRLGTPAGTTRGFGVAEFKEIGSLIAEVLDGLKVANSDEGNAAVEQAVKEKVIALTGRFPMYGYQG</sequence>
<evidence type="ECO:0000255" key="1">
    <source>
        <dbReference type="HAMAP-Rule" id="MF_00051"/>
    </source>
</evidence>